<protein>
    <recommendedName>
        <fullName evidence="1">Cell division protein ZapB</fullName>
    </recommendedName>
</protein>
<sequence>MSFEVLEKLEAKIQTAVDTIALLQMEVEELKEEKQQLQNEAQELREAREALEQRAQQVQQEHAAWQERIRSLLGKMEDVE</sequence>
<proteinExistence type="inferred from homology"/>
<keyword id="KW-0131">Cell cycle</keyword>
<keyword id="KW-0132">Cell division</keyword>
<keyword id="KW-0175">Coiled coil</keyword>
<keyword id="KW-0963">Cytoplasm</keyword>
<keyword id="KW-0717">Septation</keyword>
<reference key="1">
    <citation type="submission" date="2007-03" db="EMBL/GenBank/DDBJ databases">
        <authorList>
            <person name="Heidelberg J."/>
        </authorList>
    </citation>
    <scope>NUCLEOTIDE SEQUENCE [LARGE SCALE GENOMIC DNA]</scope>
    <source>
        <strain>ATCC 39541 / Classical Ogawa 395 / O395</strain>
    </source>
</reference>
<reference key="2">
    <citation type="journal article" date="2008" name="PLoS ONE">
        <title>A recalibrated molecular clock and independent origins for the cholera pandemic clones.</title>
        <authorList>
            <person name="Feng L."/>
            <person name="Reeves P.R."/>
            <person name="Lan R."/>
            <person name="Ren Y."/>
            <person name="Gao C."/>
            <person name="Zhou Z."/>
            <person name="Ren Y."/>
            <person name="Cheng J."/>
            <person name="Wang W."/>
            <person name="Wang J."/>
            <person name="Qian W."/>
            <person name="Li D."/>
            <person name="Wang L."/>
        </authorList>
    </citation>
    <scope>NUCLEOTIDE SEQUENCE [LARGE SCALE GENOMIC DNA]</scope>
    <source>
        <strain>ATCC 39541 / Classical Ogawa 395 / O395</strain>
    </source>
</reference>
<dbReference type="EMBL" id="CP000627">
    <property type="protein sequence ID" value="ABQ21989.1"/>
    <property type="molecule type" value="Genomic_DNA"/>
</dbReference>
<dbReference type="EMBL" id="CP001235">
    <property type="protein sequence ID" value="ACP10784.1"/>
    <property type="molecule type" value="Genomic_DNA"/>
</dbReference>
<dbReference type="RefSeq" id="WP_000007388.1">
    <property type="nucleotide sequence ID" value="NZ_JAACZH010000007.1"/>
</dbReference>
<dbReference type="SMR" id="A5F4W4"/>
<dbReference type="GeneID" id="94012668"/>
<dbReference type="KEGG" id="vco:VC0395_A2259"/>
<dbReference type="KEGG" id="vcr:VC395_2799"/>
<dbReference type="PATRIC" id="fig|345073.21.peg.2697"/>
<dbReference type="eggNOG" id="COG3074">
    <property type="taxonomic scope" value="Bacteria"/>
</dbReference>
<dbReference type="HOGENOM" id="CLU_171174_2_0_6"/>
<dbReference type="Proteomes" id="UP000000249">
    <property type="component" value="Chromosome 2"/>
</dbReference>
<dbReference type="GO" id="GO:0005737">
    <property type="term" value="C:cytoplasm"/>
    <property type="evidence" value="ECO:0007669"/>
    <property type="project" value="UniProtKB-SubCell"/>
</dbReference>
<dbReference type="GO" id="GO:0000917">
    <property type="term" value="P:division septum assembly"/>
    <property type="evidence" value="ECO:0007669"/>
    <property type="project" value="UniProtKB-KW"/>
</dbReference>
<dbReference type="GO" id="GO:0043093">
    <property type="term" value="P:FtsZ-dependent cytokinesis"/>
    <property type="evidence" value="ECO:0007669"/>
    <property type="project" value="UniProtKB-UniRule"/>
</dbReference>
<dbReference type="Gene3D" id="1.20.5.340">
    <property type="match status" value="1"/>
</dbReference>
<dbReference type="HAMAP" id="MF_01196">
    <property type="entry name" value="ZapB"/>
    <property type="match status" value="1"/>
</dbReference>
<dbReference type="InterPro" id="IPR009252">
    <property type="entry name" value="Cell_div_ZapB"/>
</dbReference>
<dbReference type="Pfam" id="PF06005">
    <property type="entry name" value="ZapB"/>
    <property type="match status" value="1"/>
</dbReference>
<gene>
    <name evidence="1" type="primary">zapB</name>
    <name type="ordered locus">VC0395_A2259</name>
    <name type="ordered locus">VC395_2799</name>
</gene>
<comment type="function">
    <text evidence="1">Non-essential, abundant cell division factor that is required for proper Z-ring formation. It is recruited early to the divisome by direct interaction with FtsZ, stimulating Z-ring assembly and thereby promoting cell division earlier in the cell cycle. Its recruitment to the Z-ring requires functional FtsA or ZipA.</text>
</comment>
<comment type="subunit">
    <text evidence="1">Homodimer. The ends of the coiled-coil dimer bind to each other, forming polymers. Interacts with FtsZ.</text>
</comment>
<comment type="subcellular location">
    <subcellularLocation>
        <location>Cytoplasm</location>
    </subcellularLocation>
    <text evidence="1">Localizes to the septum at mid-cell, in a FtsZ-like pattern.</text>
</comment>
<comment type="similarity">
    <text evidence="1">Belongs to the ZapB family.</text>
</comment>
<accession>A5F4W4</accession>
<accession>C3LXT4</accession>
<organism>
    <name type="scientific">Vibrio cholerae serotype O1 (strain ATCC 39541 / Classical Ogawa 395 / O395)</name>
    <dbReference type="NCBI Taxonomy" id="345073"/>
    <lineage>
        <taxon>Bacteria</taxon>
        <taxon>Pseudomonadati</taxon>
        <taxon>Pseudomonadota</taxon>
        <taxon>Gammaproteobacteria</taxon>
        <taxon>Vibrionales</taxon>
        <taxon>Vibrionaceae</taxon>
        <taxon>Vibrio</taxon>
    </lineage>
</organism>
<name>ZAPB_VIBC3</name>
<feature type="chain" id="PRO_0000333939" description="Cell division protein ZapB">
    <location>
        <begin position="1"/>
        <end position="80"/>
    </location>
</feature>
<feature type="coiled-coil region" evidence="1">
    <location>
        <begin position="3"/>
        <end position="80"/>
    </location>
</feature>
<evidence type="ECO:0000255" key="1">
    <source>
        <dbReference type="HAMAP-Rule" id="MF_01196"/>
    </source>
</evidence>